<protein>
    <recommendedName>
        <fullName evidence="1">NADH-quinone oxidoreductase subunit N</fullName>
        <ecNumber evidence="1">7.1.1.-</ecNumber>
    </recommendedName>
    <alternativeName>
        <fullName evidence="1">NADH dehydrogenase I subunit N</fullName>
    </alternativeName>
    <alternativeName>
        <fullName evidence="1">NDH-1 subunit N</fullName>
    </alternativeName>
</protein>
<keyword id="KW-0997">Cell inner membrane</keyword>
<keyword id="KW-1003">Cell membrane</keyword>
<keyword id="KW-0472">Membrane</keyword>
<keyword id="KW-0520">NAD</keyword>
<keyword id="KW-0874">Quinone</keyword>
<keyword id="KW-1278">Translocase</keyword>
<keyword id="KW-0812">Transmembrane</keyword>
<keyword id="KW-1133">Transmembrane helix</keyword>
<keyword id="KW-0813">Transport</keyword>
<keyword id="KW-0830">Ubiquinone</keyword>
<sequence>MNEIAFLDLNEISLQSLSPMLSMMVFALFILIVGAIKKDLSRNFYCVFCIIAIFVNLGITLDFNGLSLSFWDMLLVDGISIISQIIILIASALFIPLALSTKEYFEYKIYEYYALFLFMIAGFLFMVSSNNLLIIFLGLEISSLCLYTLIALHNKAKSVEAAIKYFAMGSLSAGFFAMAIAMFYLATNSIDIARIGVAIKDLSLNQNLIILLGCVFIASAIGFKLSLIPFHTWIPDVYEGSNAPLAGYMSIVPKVAGFIVALRIFAMLEGSGISWIKDMLYIIAVLTMSLANIMALVQKDVKRMLAFSSIAHAGVVLCALVANSHEANVALFFYWIMFLFANLGAFSMLWVARCDDVVCWDKRFKHPYEKFSGLIKILPSYAVIMGIFMIALAGIPPFSVFWGKMVLISSLIKSDYVVLSLIIMINSAIAIYYYLKLIVFMFLKEPIVKDKNIYISNVSMALKVIVGVAVAGTVFAFLFSGAILEFIEHFVFASGF</sequence>
<dbReference type="EC" id="7.1.1.-" evidence="1"/>
<dbReference type="EMBL" id="CP000792">
    <property type="protein sequence ID" value="EAT97897.1"/>
    <property type="molecule type" value="Genomic_DNA"/>
</dbReference>
<dbReference type="RefSeq" id="WP_012001127.1">
    <property type="nucleotide sequence ID" value="NC_009802.2"/>
</dbReference>
<dbReference type="SMR" id="A7ZBF3"/>
<dbReference type="STRING" id="360104.CCC13826_1669"/>
<dbReference type="KEGG" id="cco:CCC13826_1669"/>
<dbReference type="eggNOG" id="COG1007">
    <property type="taxonomic scope" value="Bacteria"/>
</dbReference>
<dbReference type="HOGENOM" id="CLU_007100_1_4_7"/>
<dbReference type="OrthoDB" id="9768329at2"/>
<dbReference type="Proteomes" id="UP000001121">
    <property type="component" value="Chromosome"/>
</dbReference>
<dbReference type="GO" id="GO:0005886">
    <property type="term" value="C:plasma membrane"/>
    <property type="evidence" value="ECO:0007669"/>
    <property type="project" value="UniProtKB-SubCell"/>
</dbReference>
<dbReference type="GO" id="GO:0008137">
    <property type="term" value="F:NADH dehydrogenase (ubiquinone) activity"/>
    <property type="evidence" value="ECO:0007669"/>
    <property type="project" value="InterPro"/>
</dbReference>
<dbReference type="GO" id="GO:0050136">
    <property type="term" value="F:NADH:ubiquinone reductase (non-electrogenic) activity"/>
    <property type="evidence" value="ECO:0007669"/>
    <property type="project" value="UniProtKB-UniRule"/>
</dbReference>
<dbReference type="GO" id="GO:0048038">
    <property type="term" value="F:quinone binding"/>
    <property type="evidence" value="ECO:0007669"/>
    <property type="project" value="UniProtKB-KW"/>
</dbReference>
<dbReference type="GO" id="GO:0042773">
    <property type="term" value="P:ATP synthesis coupled electron transport"/>
    <property type="evidence" value="ECO:0007669"/>
    <property type="project" value="InterPro"/>
</dbReference>
<dbReference type="HAMAP" id="MF_00445">
    <property type="entry name" value="NDH1_NuoN_1"/>
    <property type="match status" value="1"/>
</dbReference>
<dbReference type="InterPro" id="IPR010096">
    <property type="entry name" value="NADH-Q_OxRdtase_suN/2"/>
</dbReference>
<dbReference type="InterPro" id="IPR001750">
    <property type="entry name" value="ND/Mrp_TM"/>
</dbReference>
<dbReference type="NCBIfam" id="TIGR01770">
    <property type="entry name" value="NDH_I_N"/>
    <property type="match status" value="1"/>
</dbReference>
<dbReference type="NCBIfam" id="NF004444">
    <property type="entry name" value="PRK05777.2-2"/>
    <property type="match status" value="1"/>
</dbReference>
<dbReference type="PANTHER" id="PTHR22773">
    <property type="entry name" value="NADH DEHYDROGENASE"/>
    <property type="match status" value="1"/>
</dbReference>
<dbReference type="Pfam" id="PF00361">
    <property type="entry name" value="Proton_antipo_M"/>
    <property type="match status" value="1"/>
</dbReference>
<reference key="1">
    <citation type="submission" date="2007-10" db="EMBL/GenBank/DDBJ databases">
        <title>Genome sequence of Campylobacter concisus 13826 isolated from human feces.</title>
        <authorList>
            <person name="Fouts D.E."/>
            <person name="Mongodin E.F."/>
            <person name="Puiu D."/>
            <person name="Sebastian Y."/>
            <person name="Miller W.G."/>
            <person name="Mandrell R.E."/>
            <person name="On S."/>
            <person name="Nelson K.E."/>
        </authorList>
    </citation>
    <scope>NUCLEOTIDE SEQUENCE [LARGE SCALE GENOMIC DNA]</scope>
    <source>
        <strain>13826</strain>
    </source>
</reference>
<proteinExistence type="inferred from homology"/>
<comment type="function">
    <text evidence="1">NDH-1 shuttles electrons from NADH, via FMN and iron-sulfur (Fe-S) centers, to quinones in the respiratory chain. The immediate electron acceptor for the enzyme in this species is believed to be ubiquinone. Couples the redox reaction to proton translocation (for every two electrons transferred, four hydrogen ions are translocated across the cytoplasmic membrane), and thus conserves the redox energy in a proton gradient.</text>
</comment>
<comment type="catalytic activity">
    <reaction evidence="1">
        <text>a quinone + NADH + 5 H(+)(in) = a quinol + NAD(+) + 4 H(+)(out)</text>
        <dbReference type="Rhea" id="RHEA:57888"/>
        <dbReference type="ChEBI" id="CHEBI:15378"/>
        <dbReference type="ChEBI" id="CHEBI:24646"/>
        <dbReference type="ChEBI" id="CHEBI:57540"/>
        <dbReference type="ChEBI" id="CHEBI:57945"/>
        <dbReference type="ChEBI" id="CHEBI:132124"/>
    </reaction>
</comment>
<comment type="subunit">
    <text evidence="1">NDH-1 is composed of 14 different subunits. Subunits NuoA, H, J, K, L, M, N constitute the membrane sector of the complex.</text>
</comment>
<comment type="subcellular location">
    <subcellularLocation>
        <location evidence="1">Cell inner membrane</location>
        <topology evidence="1">Multi-pass membrane protein</topology>
    </subcellularLocation>
</comment>
<comment type="similarity">
    <text evidence="1">Belongs to the complex I subunit 2 family.</text>
</comment>
<name>NUON_CAMC1</name>
<gene>
    <name evidence="1" type="primary">nuoN</name>
    <name type="ordered locus">Ccon26_01980</name>
    <name type="ORF">CCC13826_1669</name>
</gene>
<organism>
    <name type="scientific">Campylobacter concisus (strain 13826)</name>
    <dbReference type="NCBI Taxonomy" id="360104"/>
    <lineage>
        <taxon>Bacteria</taxon>
        <taxon>Pseudomonadati</taxon>
        <taxon>Campylobacterota</taxon>
        <taxon>Epsilonproteobacteria</taxon>
        <taxon>Campylobacterales</taxon>
        <taxon>Campylobacteraceae</taxon>
        <taxon>Campylobacter</taxon>
    </lineage>
</organism>
<accession>A7ZBF3</accession>
<feature type="chain" id="PRO_0000391118" description="NADH-quinone oxidoreductase subunit N">
    <location>
        <begin position="1"/>
        <end position="496"/>
    </location>
</feature>
<feature type="transmembrane region" description="Helical" evidence="1">
    <location>
        <begin position="16"/>
        <end position="36"/>
    </location>
</feature>
<feature type="transmembrane region" description="Helical" evidence="1">
    <location>
        <begin position="46"/>
        <end position="66"/>
    </location>
</feature>
<feature type="transmembrane region" description="Helical" evidence="1">
    <location>
        <begin position="79"/>
        <end position="99"/>
    </location>
</feature>
<feature type="transmembrane region" description="Helical" evidence="1">
    <location>
        <begin position="116"/>
        <end position="136"/>
    </location>
</feature>
<feature type="transmembrane region" description="Helical" evidence="1">
    <location>
        <begin position="166"/>
        <end position="186"/>
    </location>
</feature>
<feature type="transmembrane region" description="Helical" evidence="1">
    <location>
        <begin position="208"/>
        <end position="228"/>
    </location>
</feature>
<feature type="transmembrane region" description="Helical" evidence="1">
    <location>
        <begin position="245"/>
        <end position="267"/>
    </location>
</feature>
<feature type="transmembrane region" description="Helical" evidence="1">
    <location>
        <begin position="278"/>
        <end position="298"/>
    </location>
</feature>
<feature type="transmembrane region" description="Helical" evidence="1">
    <location>
        <begin position="304"/>
        <end position="324"/>
    </location>
</feature>
<feature type="transmembrane region" description="Helical" evidence="1">
    <location>
        <begin position="331"/>
        <end position="351"/>
    </location>
</feature>
<feature type="transmembrane region" description="Helical" evidence="1">
    <location>
        <begin position="382"/>
        <end position="402"/>
    </location>
</feature>
<feature type="transmembrane region" description="Helical" evidence="1">
    <location>
        <begin position="422"/>
        <end position="442"/>
    </location>
</feature>
<feature type="transmembrane region" description="Helical" evidence="1">
    <location>
        <begin position="464"/>
        <end position="484"/>
    </location>
</feature>
<evidence type="ECO:0000255" key="1">
    <source>
        <dbReference type="HAMAP-Rule" id="MF_00445"/>
    </source>
</evidence>